<accession>A9CIN5</accession>
<gene>
    <name evidence="3" type="primary">yepA</name>
    <name evidence="6" type="ordered locus">Atu1774</name>
</gene>
<name>YEPA_AGRFC</name>
<feature type="signal peptide" evidence="1">
    <location>
        <begin position="1"/>
        <end position="26"/>
    </location>
</feature>
<feature type="chain" id="PRO_5002733850" description="Peptidoglycan-binding protein YepA">
    <location>
        <begin position="27"/>
        <end position="615"/>
    </location>
</feature>
<sequence>MRNLAALLPALFLLGSSLLPAGTALAQPLHGISMHGTPELPADFRHFPYVNPDVKKGGRISYGVVGTFDSLNPFVLKGMRTTARGVWDPEFGNLLYESLMLRSSDEPFSLYGLLAETVEWDDERSFIQFNINPRAKWSDGKPVTPDDVIFTFSLLKEKGRPPFNSRLDGVAKMEKVGDRGVRFTFNDKANRETPLILASSTPILPKHAIDPEKFEQAGLGPVVGSGPYRIKTLRPGERIIWERNPDYWGKDIPGKVGFDNYDEISVTYFLQVTTMFEAFKKGDIDIYPEGDAINGTSDTSHWGQAYNFPAVHRGDIVKDVFQPRLPTGMFGLVFNTRRATFADEKVREGLSYALDFEWLNRNILGGSFKRTQSYWQNSPLGAYGNAADERELALLGDAAKTMPAELLAGTYAMPTTDGTGADRKVLKLAVDKLKEAGYSIKNGKMSDANGRQLAFEIMTQNPAQERIALAYQRSLNLIGVAMGIRSVDDGQYQARSNSFDYDMIIRSLPSSLSPGMEQLNRWNSLSRDAQGSFNYAGVANPDIDRMIEALLQARSTEDFQAAVRAYDRLLVAGHYIIPLYYIGAQWVARWKYIDRPDMTPISGNQKQTWWDARVQ</sequence>
<protein>
    <recommendedName>
        <fullName evidence="4">Peptidoglycan-binding protein YepA</fullName>
    </recommendedName>
    <alternativeName>
        <fullName evidence="3">Yej-peptidoglycan binding protein A</fullName>
    </alternativeName>
</protein>
<comment type="function">
    <text evidence="2">Part of the ABC transporter complex YejBEF-YepA involved in the uptake of muropeptides, the breakdown products of cell wall peptidoglycan (PubMed:36566216). The import of muropeptides into the cell enables peptidoglycan recycling, which is vital for cell wall integrity in this bacterium (PubMed:36566216). Probably binds muropeptides (PubMed:36566216).</text>
</comment>
<comment type="subunit">
    <text evidence="5">The complex is composed of one ATP-binding protein (YejF), two transmembrane proteins (YejB and YejE) and a solute-binding protein (YepA).</text>
</comment>
<comment type="subcellular location">
    <subcellularLocation>
        <location evidence="5">Periplasm</location>
    </subcellularLocation>
</comment>
<comment type="disruption phenotype">
    <text evidence="2">The deletion mutant is hypersensitive to ampicillin, in a manner only partly dependent on the beta-lactamase AmpC (PubMed:36566216). Deletion of the gene leads to the accumulation of peptidoglycan fragments in the extracellular milieu (PubMed:36566216). The mutant displays cell swelling and lysis as well as a severe growth defect (PubMed:36566216).</text>
</comment>
<comment type="miscellaneous">
    <text evidence="2">YepA is located separately from the rest of the transporter in the genome.</text>
</comment>
<comment type="similarity">
    <text evidence="4">Belongs to the bacterial solute-binding protein 5 family.</text>
</comment>
<proteinExistence type="inferred from homology"/>
<keyword id="KW-0571">Peptide transport</keyword>
<keyword id="KW-0574">Periplasm</keyword>
<keyword id="KW-0653">Protein transport</keyword>
<keyword id="KW-1185">Reference proteome</keyword>
<keyword id="KW-0732">Signal</keyword>
<keyword id="KW-0813">Transport</keyword>
<evidence type="ECO:0000255" key="1"/>
<evidence type="ECO:0000269" key="2">
    <source>
    </source>
</evidence>
<evidence type="ECO:0000303" key="3">
    <source>
    </source>
</evidence>
<evidence type="ECO:0000305" key="4"/>
<evidence type="ECO:0000305" key="5">
    <source>
    </source>
</evidence>
<evidence type="ECO:0000312" key="6">
    <source>
        <dbReference type="EMBL" id="AAK87543.2"/>
    </source>
</evidence>
<reference key="1">
    <citation type="journal article" date="2001" name="Science">
        <title>The genome of the natural genetic engineer Agrobacterium tumefaciens C58.</title>
        <authorList>
            <person name="Wood D.W."/>
            <person name="Setubal J.C."/>
            <person name="Kaul R."/>
            <person name="Monks D.E."/>
            <person name="Kitajima J.P."/>
            <person name="Okura V.K."/>
            <person name="Zhou Y."/>
            <person name="Chen L."/>
            <person name="Wood G.E."/>
            <person name="Almeida N.F. Jr."/>
            <person name="Woo L."/>
            <person name="Chen Y."/>
            <person name="Paulsen I.T."/>
            <person name="Eisen J.A."/>
            <person name="Karp P.D."/>
            <person name="Bovee D. Sr."/>
            <person name="Chapman P."/>
            <person name="Clendenning J."/>
            <person name="Deatherage G."/>
            <person name="Gillet W."/>
            <person name="Grant C."/>
            <person name="Kutyavin T."/>
            <person name="Levy R."/>
            <person name="Li M.-J."/>
            <person name="McClelland E."/>
            <person name="Palmieri A."/>
            <person name="Raymond C."/>
            <person name="Rouse G."/>
            <person name="Saenphimmachak C."/>
            <person name="Wu Z."/>
            <person name="Romero P."/>
            <person name="Gordon D."/>
            <person name="Zhang S."/>
            <person name="Yoo H."/>
            <person name="Tao Y."/>
            <person name="Biddle P."/>
            <person name="Jung M."/>
            <person name="Krespan W."/>
            <person name="Perry M."/>
            <person name="Gordon-Kamm B."/>
            <person name="Liao L."/>
            <person name="Kim S."/>
            <person name="Hendrick C."/>
            <person name="Zhao Z.-Y."/>
            <person name="Dolan M."/>
            <person name="Chumley F."/>
            <person name="Tingey S.V."/>
            <person name="Tomb J.-F."/>
            <person name="Gordon M.P."/>
            <person name="Olson M.V."/>
            <person name="Nester E.W."/>
        </authorList>
    </citation>
    <scope>NUCLEOTIDE SEQUENCE [LARGE SCALE GENOMIC DNA]</scope>
    <source>
        <strain>C58 / ATCC 33970</strain>
    </source>
</reference>
<reference key="2">
    <citation type="journal article" date="2001" name="Science">
        <title>Genome sequence of the plant pathogen and biotechnology agent Agrobacterium tumefaciens C58.</title>
        <authorList>
            <person name="Goodner B."/>
            <person name="Hinkle G."/>
            <person name="Gattung S."/>
            <person name="Miller N."/>
            <person name="Blanchard M."/>
            <person name="Qurollo B."/>
            <person name="Goldman B.S."/>
            <person name="Cao Y."/>
            <person name="Askenazi M."/>
            <person name="Halling C."/>
            <person name="Mullin L."/>
            <person name="Houmiel K."/>
            <person name="Gordon J."/>
            <person name="Vaudin M."/>
            <person name="Iartchouk O."/>
            <person name="Epp A."/>
            <person name="Liu F."/>
            <person name="Wollam C."/>
            <person name="Allinger M."/>
            <person name="Doughty D."/>
            <person name="Scott C."/>
            <person name="Lappas C."/>
            <person name="Markelz B."/>
            <person name="Flanagan C."/>
            <person name="Crowell C."/>
            <person name="Gurson J."/>
            <person name="Lomo C."/>
            <person name="Sear C."/>
            <person name="Strub G."/>
            <person name="Cielo C."/>
            <person name="Slater S."/>
        </authorList>
    </citation>
    <scope>NUCLEOTIDE SEQUENCE [LARGE SCALE GENOMIC DNA]</scope>
    <source>
        <strain>C58 / ATCC 33970</strain>
    </source>
</reference>
<reference key="3">
    <citation type="journal article" date="2022" name="Nat. Commun.">
        <title>Peptidoglycan recycling mediated by an ABC transporter in the plant pathogen Agrobacterium tumefaciens.</title>
        <authorList>
            <person name="Gilmore M.C."/>
            <person name="Cava F."/>
        </authorList>
    </citation>
    <scope>FUNCTION</scope>
    <scope>DISRUPTION PHENOTYPE</scope>
    <source>
        <strain>C58 / ATCC 33970</strain>
    </source>
</reference>
<organism>
    <name type="scientific">Agrobacterium fabrum (strain C58 / ATCC 33970)</name>
    <name type="common">Agrobacterium tumefaciens (strain C58)</name>
    <dbReference type="NCBI Taxonomy" id="176299"/>
    <lineage>
        <taxon>Bacteria</taxon>
        <taxon>Pseudomonadati</taxon>
        <taxon>Pseudomonadota</taxon>
        <taxon>Alphaproteobacteria</taxon>
        <taxon>Hyphomicrobiales</taxon>
        <taxon>Rhizobiaceae</taxon>
        <taxon>Rhizobium/Agrobacterium group</taxon>
        <taxon>Agrobacterium</taxon>
        <taxon>Agrobacterium tumefaciens complex</taxon>
    </lineage>
</organism>
<dbReference type="EMBL" id="AE007869">
    <property type="protein sequence ID" value="AAK87543.2"/>
    <property type="molecule type" value="Genomic_DNA"/>
</dbReference>
<dbReference type="RefSeq" id="NP_354758.2">
    <property type="nucleotide sequence ID" value="NC_003062.2"/>
</dbReference>
<dbReference type="RefSeq" id="WP_010971855.1">
    <property type="nucleotide sequence ID" value="NC_003062.2"/>
</dbReference>
<dbReference type="SMR" id="A9CIN5"/>
<dbReference type="STRING" id="176299.Atu1774"/>
<dbReference type="EnsemblBacteria" id="AAK87543">
    <property type="protein sequence ID" value="AAK87543"/>
    <property type="gene ID" value="Atu1774"/>
</dbReference>
<dbReference type="GeneID" id="1133812"/>
<dbReference type="KEGG" id="atu:Atu1774"/>
<dbReference type="PATRIC" id="fig|176299.10.peg.1788"/>
<dbReference type="eggNOG" id="COG4166">
    <property type="taxonomic scope" value="Bacteria"/>
</dbReference>
<dbReference type="HOGENOM" id="CLU_023171_0_0_5"/>
<dbReference type="OrthoDB" id="9803988at2"/>
<dbReference type="PhylomeDB" id="A9CIN5"/>
<dbReference type="Proteomes" id="UP000000813">
    <property type="component" value="Chromosome circular"/>
</dbReference>
<dbReference type="GO" id="GO:0043190">
    <property type="term" value="C:ATP-binding cassette (ABC) transporter complex"/>
    <property type="evidence" value="ECO:0007669"/>
    <property type="project" value="InterPro"/>
</dbReference>
<dbReference type="GO" id="GO:0030288">
    <property type="term" value="C:outer membrane-bounded periplasmic space"/>
    <property type="evidence" value="ECO:0007669"/>
    <property type="project" value="TreeGrafter"/>
</dbReference>
<dbReference type="GO" id="GO:1904680">
    <property type="term" value="F:peptide transmembrane transporter activity"/>
    <property type="evidence" value="ECO:0007669"/>
    <property type="project" value="TreeGrafter"/>
</dbReference>
<dbReference type="GO" id="GO:0042884">
    <property type="term" value="P:microcin transport"/>
    <property type="evidence" value="ECO:0007669"/>
    <property type="project" value="TreeGrafter"/>
</dbReference>
<dbReference type="GO" id="GO:0015833">
    <property type="term" value="P:peptide transport"/>
    <property type="evidence" value="ECO:0007669"/>
    <property type="project" value="UniProtKB-KW"/>
</dbReference>
<dbReference type="GO" id="GO:0015031">
    <property type="term" value="P:protein transport"/>
    <property type="evidence" value="ECO:0007669"/>
    <property type="project" value="UniProtKB-KW"/>
</dbReference>
<dbReference type="CDD" id="cd08497">
    <property type="entry name" value="MbnE-like"/>
    <property type="match status" value="1"/>
</dbReference>
<dbReference type="Gene3D" id="3.10.105.10">
    <property type="entry name" value="Dipeptide-binding Protein, Domain 3"/>
    <property type="match status" value="1"/>
</dbReference>
<dbReference type="Gene3D" id="3.40.190.10">
    <property type="entry name" value="Periplasmic binding protein-like II"/>
    <property type="match status" value="1"/>
</dbReference>
<dbReference type="InterPro" id="IPR030678">
    <property type="entry name" value="Peptide/Ni-bd"/>
</dbReference>
<dbReference type="InterPro" id="IPR039424">
    <property type="entry name" value="SBP_5"/>
</dbReference>
<dbReference type="InterPro" id="IPR000914">
    <property type="entry name" value="SBP_5_dom"/>
</dbReference>
<dbReference type="PANTHER" id="PTHR30290:SF64">
    <property type="entry name" value="ABC TRANSPORTER PERIPLASMIC BINDING PROTEIN"/>
    <property type="match status" value="1"/>
</dbReference>
<dbReference type="PANTHER" id="PTHR30290">
    <property type="entry name" value="PERIPLASMIC BINDING COMPONENT OF ABC TRANSPORTER"/>
    <property type="match status" value="1"/>
</dbReference>
<dbReference type="Pfam" id="PF00496">
    <property type="entry name" value="SBP_bac_5"/>
    <property type="match status" value="1"/>
</dbReference>
<dbReference type="PIRSF" id="PIRSF002741">
    <property type="entry name" value="MppA"/>
    <property type="match status" value="1"/>
</dbReference>
<dbReference type="SUPFAM" id="SSF53850">
    <property type="entry name" value="Periplasmic binding protein-like II"/>
    <property type="match status" value="1"/>
</dbReference>